<protein>
    <recommendedName>
        <fullName evidence="1">Chromosomal replication initiator protein DnaA</fullName>
    </recommendedName>
</protein>
<feature type="chain" id="PRO_0000114250" description="Chromosomal replication initiator protein DnaA">
    <location>
        <begin position="1"/>
        <end position="466"/>
    </location>
</feature>
<feature type="region of interest" description="Domain I, interacts with DnaA modulators" evidence="1">
    <location>
        <begin position="1"/>
        <end position="86"/>
    </location>
</feature>
<feature type="region of interest" description="Domain II" evidence="1">
    <location>
        <begin position="86"/>
        <end position="129"/>
    </location>
</feature>
<feature type="region of interest" description="Domain III, AAA+ region" evidence="1">
    <location>
        <begin position="130"/>
        <end position="346"/>
    </location>
</feature>
<feature type="region of interest" description="Domain IV, binds dsDNA" evidence="1">
    <location>
        <begin position="347"/>
        <end position="466"/>
    </location>
</feature>
<feature type="binding site" evidence="1">
    <location>
        <position position="174"/>
    </location>
    <ligand>
        <name>ATP</name>
        <dbReference type="ChEBI" id="CHEBI:30616"/>
    </ligand>
</feature>
<feature type="binding site" evidence="1">
    <location>
        <position position="176"/>
    </location>
    <ligand>
        <name>ATP</name>
        <dbReference type="ChEBI" id="CHEBI:30616"/>
    </ligand>
</feature>
<feature type="binding site" evidence="1">
    <location>
        <position position="177"/>
    </location>
    <ligand>
        <name>ATP</name>
        <dbReference type="ChEBI" id="CHEBI:30616"/>
    </ligand>
</feature>
<feature type="binding site" evidence="1">
    <location>
        <position position="178"/>
    </location>
    <ligand>
        <name>ATP</name>
        <dbReference type="ChEBI" id="CHEBI:30616"/>
    </ligand>
</feature>
<keyword id="KW-0067">ATP-binding</keyword>
<keyword id="KW-0963">Cytoplasm</keyword>
<keyword id="KW-0235">DNA replication</keyword>
<keyword id="KW-0238">DNA-binding</keyword>
<keyword id="KW-0446">Lipid-binding</keyword>
<keyword id="KW-0547">Nucleotide-binding</keyword>
<comment type="function">
    <text evidence="1">Plays an essential role in the initiation and regulation of chromosomal replication. ATP-DnaA binds to the origin of replication (oriC) to initiate formation of the DNA replication initiation complex once per cell cycle. Binds the DnaA box (a 9 base pair repeat at the origin) and separates the double-stranded (ds)DNA. Forms a right-handed helical filament on oriC DNA; dsDNA binds to the exterior of the filament while single-stranded (ss)DNA is stabiized in the filament's interior. The ATP-DnaA-oriC complex binds and stabilizes one strand of the AT-rich DNA unwinding element (DUE), permitting loading of DNA polymerase. After initiation quickly degrades to an ADP-DnaA complex that is not apt for DNA replication. Binds acidic phospholipids.</text>
</comment>
<comment type="subunit">
    <text evidence="1">Oligomerizes as a right-handed, spiral filament on DNA at oriC.</text>
</comment>
<comment type="subcellular location">
    <subcellularLocation>
        <location evidence="1">Cytoplasm</location>
    </subcellularLocation>
</comment>
<comment type="domain">
    <text evidence="1">Domain I is involved in oligomerization and binding regulators, domain II is flexibile and of varying length in different bacteria, domain III forms the AAA+ region, while domain IV binds dsDNA.</text>
</comment>
<comment type="similarity">
    <text evidence="1">Belongs to the DnaA family.</text>
</comment>
<accession>Q5PKU6</accession>
<evidence type="ECO:0000255" key="1">
    <source>
        <dbReference type="HAMAP-Rule" id="MF_00377"/>
    </source>
</evidence>
<proteinExistence type="inferred from homology"/>
<organism>
    <name type="scientific">Salmonella paratyphi A (strain ATCC 9150 / SARB42)</name>
    <dbReference type="NCBI Taxonomy" id="295319"/>
    <lineage>
        <taxon>Bacteria</taxon>
        <taxon>Pseudomonadati</taxon>
        <taxon>Pseudomonadota</taxon>
        <taxon>Gammaproteobacteria</taxon>
        <taxon>Enterobacterales</taxon>
        <taxon>Enterobacteriaceae</taxon>
        <taxon>Salmonella</taxon>
    </lineage>
</organism>
<gene>
    <name evidence="1" type="primary">dnaA</name>
    <name type="ordered locus">SPA3682</name>
</gene>
<reference key="1">
    <citation type="journal article" date="2004" name="Nat. Genet.">
        <title>Comparison of genome degradation in Paratyphi A and Typhi, human-restricted serovars of Salmonella enterica that cause typhoid.</title>
        <authorList>
            <person name="McClelland M."/>
            <person name="Sanderson K.E."/>
            <person name="Clifton S.W."/>
            <person name="Latreille P."/>
            <person name="Porwollik S."/>
            <person name="Sabo A."/>
            <person name="Meyer R."/>
            <person name="Bieri T."/>
            <person name="Ozersky P."/>
            <person name="McLellan M."/>
            <person name="Harkins C.R."/>
            <person name="Wang C."/>
            <person name="Nguyen C."/>
            <person name="Berghoff A."/>
            <person name="Elliott G."/>
            <person name="Kohlberg S."/>
            <person name="Strong C."/>
            <person name="Du F."/>
            <person name="Carter J."/>
            <person name="Kremizki C."/>
            <person name="Layman D."/>
            <person name="Leonard S."/>
            <person name="Sun H."/>
            <person name="Fulton L."/>
            <person name="Nash W."/>
            <person name="Miner T."/>
            <person name="Minx P."/>
            <person name="Delehaunty K."/>
            <person name="Fronick C."/>
            <person name="Magrini V."/>
            <person name="Nhan M."/>
            <person name="Warren W."/>
            <person name="Florea L."/>
            <person name="Spieth J."/>
            <person name="Wilson R.K."/>
        </authorList>
    </citation>
    <scope>NUCLEOTIDE SEQUENCE [LARGE SCALE GENOMIC DNA]</scope>
    <source>
        <strain>ATCC 9150 / SARB42</strain>
    </source>
</reference>
<sequence length="466" mass="52598">MSLSLWQQCLARLQDELPATEFSMWIRPLQAELSDNTLALYAPNRFVLDWVRDKYLNNINGLLNTFCGADAPQLRFEVGTKPVTQTLKTPVHNVVAPAQTTTAQPQRVAPAARSGWDNVPAPAEPTYRSNVNVKHTFDNFVEGKSNQLARAAARQVADNPGGAYNPLFLYGGTGLGKTHLLHAVGNGIMARKPNAKVVYMHSERFVQDMVKALQNNAIEEFKRYYRSVDALLIDDIQFFANKERSQEEFFHTFNALLEGNQQIILTSDRYPKEINGVEDRLKSRFGWGLTVAIEPPELETRVAILMKKADENDIRLPGEVAFFIAKRLRSNVRELEGALNRVIANANFTGRAITIDFVREALRDLLALQEKLVTIDNIQKTVAEYYKIKIADLLSKRRSRSVARPRQMAMALAKELTNHSLPEIGDAFGGRDHTTVLHACRKIEQLREESHDIKEDFSNLIRTLSS</sequence>
<dbReference type="EMBL" id="CP000026">
    <property type="protein sequence ID" value="AAV79474.1"/>
    <property type="molecule type" value="Genomic_DNA"/>
</dbReference>
<dbReference type="RefSeq" id="WP_000059093.1">
    <property type="nucleotide sequence ID" value="NC_006511.1"/>
</dbReference>
<dbReference type="SMR" id="Q5PKU6"/>
<dbReference type="KEGG" id="spt:SPA3682"/>
<dbReference type="HOGENOM" id="CLU_026910_0_1_6"/>
<dbReference type="Proteomes" id="UP000008185">
    <property type="component" value="Chromosome"/>
</dbReference>
<dbReference type="GO" id="GO:0005737">
    <property type="term" value="C:cytoplasm"/>
    <property type="evidence" value="ECO:0007669"/>
    <property type="project" value="UniProtKB-SubCell"/>
</dbReference>
<dbReference type="GO" id="GO:0005886">
    <property type="term" value="C:plasma membrane"/>
    <property type="evidence" value="ECO:0007669"/>
    <property type="project" value="TreeGrafter"/>
</dbReference>
<dbReference type="GO" id="GO:0005524">
    <property type="term" value="F:ATP binding"/>
    <property type="evidence" value="ECO:0007669"/>
    <property type="project" value="UniProtKB-UniRule"/>
</dbReference>
<dbReference type="GO" id="GO:0016887">
    <property type="term" value="F:ATP hydrolysis activity"/>
    <property type="evidence" value="ECO:0007669"/>
    <property type="project" value="InterPro"/>
</dbReference>
<dbReference type="GO" id="GO:0003688">
    <property type="term" value="F:DNA replication origin binding"/>
    <property type="evidence" value="ECO:0007669"/>
    <property type="project" value="UniProtKB-UniRule"/>
</dbReference>
<dbReference type="GO" id="GO:0008289">
    <property type="term" value="F:lipid binding"/>
    <property type="evidence" value="ECO:0007669"/>
    <property type="project" value="UniProtKB-KW"/>
</dbReference>
<dbReference type="GO" id="GO:0006270">
    <property type="term" value="P:DNA replication initiation"/>
    <property type="evidence" value="ECO:0007669"/>
    <property type="project" value="UniProtKB-UniRule"/>
</dbReference>
<dbReference type="GO" id="GO:0006275">
    <property type="term" value="P:regulation of DNA replication"/>
    <property type="evidence" value="ECO:0007669"/>
    <property type="project" value="UniProtKB-UniRule"/>
</dbReference>
<dbReference type="CDD" id="cd00009">
    <property type="entry name" value="AAA"/>
    <property type="match status" value="1"/>
</dbReference>
<dbReference type="CDD" id="cd06571">
    <property type="entry name" value="Bac_DnaA_C"/>
    <property type="match status" value="1"/>
</dbReference>
<dbReference type="FunFam" id="1.10.1750.10:FF:000001">
    <property type="entry name" value="Chromosomal replication initiator protein DnaA"/>
    <property type="match status" value="1"/>
</dbReference>
<dbReference type="FunFam" id="1.10.8.60:FF:000003">
    <property type="entry name" value="Chromosomal replication initiator protein DnaA"/>
    <property type="match status" value="1"/>
</dbReference>
<dbReference type="FunFam" id="3.30.300.180:FF:000001">
    <property type="entry name" value="Chromosomal replication initiator protein DnaA"/>
    <property type="match status" value="1"/>
</dbReference>
<dbReference type="FunFam" id="3.40.50.300:FF:000103">
    <property type="entry name" value="Chromosomal replication initiator protein DnaA"/>
    <property type="match status" value="1"/>
</dbReference>
<dbReference type="Gene3D" id="1.10.1750.10">
    <property type="match status" value="1"/>
</dbReference>
<dbReference type="Gene3D" id="1.10.8.60">
    <property type="match status" value="1"/>
</dbReference>
<dbReference type="Gene3D" id="3.30.300.180">
    <property type="match status" value="1"/>
</dbReference>
<dbReference type="Gene3D" id="3.40.50.300">
    <property type="entry name" value="P-loop containing nucleotide triphosphate hydrolases"/>
    <property type="match status" value="1"/>
</dbReference>
<dbReference type="HAMAP" id="MF_00377">
    <property type="entry name" value="DnaA_bact"/>
    <property type="match status" value="1"/>
</dbReference>
<dbReference type="InterPro" id="IPR003593">
    <property type="entry name" value="AAA+_ATPase"/>
</dbReference>
<dbReference type="InterPro" id="IPR001957">
    <property type="entry name" value="Chromosome_initiator_DnaA"/>
</dbReference>
<dbReference type="InterPro" id="IPR020591">
    <property type="entry name" value="Chromosome_initiator_DnaA-like"/>
</dbReference>
<dbReference type="InterPro" id="IPR018312">
    <property type="entry name" value="Chromosome_initiator_DnaA_CS"/>
</dbReference>
<dbReference type="InterPro" id="IPR013159">
    <property type="entry name" value="DnaA_C"/>
</dbReference>
<dbReference type="InterPro" id="IPR013317">
    <property type="entry name" value="DnaA_dom"/>
</dbReference>
<dbReference type="InterPro" id="IPR024633">
    <property type="entry name" value="DnaA_N_dom"/>
</dbReference>
<dbReference type="InterPro" id="IPR038454">
    <property type="entry name" value="DnaA_N_sf"/>
</dbReference>
<dbReference type="InterPro" id="IPR027417">
    <property type="entry name" value="P-loop_NTPase"/>
</dbReference>
<dbReference type="InterPro" id="IPR010921">
    <property type="entry name" value="Trp_repressor/repl_initiator"/>
</dbReference>
<dbReference type="NCBIfam" id="TIGR00362">
    <property type="entry name" value="DnaA"/>
    <property type="match status" value="1"/>
</dbReference>
<dbReference type="PANTHER" id="PTHR30050">
    <property type="entry name" value="CHROMOSOMAL REPLICATION INITIATOR PROTEIN DNAA"/>
    <property type="match status" value="1"/>
</dbReference>
<dbReference type="PANTHER" id="PTHR30050:SF2">
    <property type="entry name" value="CHROMOSOMAL REPLICATION INITIATOR PROTEIN DNAA"/>
    <property type="match status" value="1"/>
</dbReference>
<dbReference type="Pfam" id="PF00308">
    <property type="entry name" value="Bac_DnaA"/>
    <property type="match status" value="1"/>
</dbReference>
<dbReference type="Pfam" id="PF08299">
    <property type="entry name" value="Bac_DnaA_C"/>
    <property type="match status" value="1"/>
</dbReference>
<dbReference type="Pfam" id="PF11638">
    <property type="entry name" value="DnaA_N"/>
    <property type="match status" value="1"/>
</dbReference>
<dbReference type="PRINTS" id="PR00051">
    <property type="entry name" value="DNAA"/>
</dbReference>
<dbReference type="SMART" id="SM00382">
    <property type="entry name" value="AAA"/>
    <property type="match status" value="1"/>
</dbReference>
<dbReference type="SMART" id="SM00760">
    <property type="entry name" value="Bac_DnaA_C"/>
    <property type="match status" value="1"/>
</dbReference>
<dbReference type="SUPFAM" id="SSF52540">
    <property type="entry name" value="P-loop containing nucleoside triphosphate hydrolases"/>
    <property type="match status" value="1"/>
</dbReference>
<dbReference type="SUPFAM" id="SSF48295">
    <property type="entry name" value="TrpR-like"/>
    <property type="match status" value="1"/>
</dbReference>
<dbReference type="PROSITE" id="PS01008">
    <property type="entry name" value="DNAA"/>
    <property type="match status" value="1"/>
</dbReference>
<name>DNAA_SALPA</name>